<reference key="1">
    <citation type="journal article" date="1999" name="Nat. Med.">
        <title>Cloning of mammalian heparanase, an important enzyme in tumor invasion and metastasis.</title>
        <authorList>
            <person name="Hulett M.D."/>
            <person name="Freeman C."/>
            <person name="Hamdorf B.J."/>
            <person name="Baker R.T."/>
            <person name="Harris M.J."/>
            <person name="Parish C.R."/>
        </authorList>
    </citation>
    <scope>NUCLEOTIDE SEQUENCE [MRNA]</scope>
    <source>
        <strain>SJL/J</strain>
        <tissue>Spleen</tissue>
    </source>
</reference>
<reference key="2">
    <citation type="journal article" date="2002" name="Protein Expr. Purif.">
        <title>Cloning, expression, and purification of mouse heparanase.</title>
        <authorList>
            <person name="Miao H.-Q."/>
            <person name="Navarro E."/>
            <person name="Patel S."/>
            <person name="Sargent D."/>
            <person name="Koo H."/>
            <person name="Wan H."/>
            <person name="Plata A."/>
            <person name="Zhou Q."/>
            <person name="Ludwig D."/>
            <person name="Bohlen P."/>
            <person name="Kussie P."/>
        </authorList>
    </citation>
    <scope>NUCLEOTIDE SEQUENCE [MRNA]</scope>
    <scope>PROTEIN SEQUENCE OF 28-57 AND 150-179</scope>
    <scope>GLYCOSYLATION</scope>
    <scope>BIOPHYSICOCHEMICAL PROPERTIES</scope>
    <scope>ACTIVITY REGULATION</scope>
    <scope>SUBUNIT</scope>
    <source>
        <strain>FVB/NJ</strain>
        <tissue>Embryo</tissue>
    </source>
</reference>
<reference key="3">
    <citation type="journal article" date="2003" name="J. Biol. Chem.">
        <title>Processing of macromolecular heparin by heparanase.</title>
        <authorList>
            <person name="Gong F."/>
            <person name="Jemth P."/>
            <person name="Galvis M.L.E."/>
            <person name="Vlodavsky I."/>
            <person name="Horner A."/>
            <person name="Lindahl U."/>
            <person name="Li J.-P."/>
        </authorList>
    </citation>
    <scope>NUCLEOTIDE SEQUENCE [MRNA]</scope>
    <scope>ACTIVITY REGULATION</scope>
</reference>
<reference key="4">
    <citation type="journal article" date="2005" name="Science">
        <title>The transcriptional landscape of the mammalian genome.</title>
        <authorList>
            <person name="Carninci P."/>
            <person name="Kasukawa T."/>
            <person name="Katayama S."/>
            <person name="Gough J."/>
            <person name="Frith M.C."/>
            <person name="Maeda N."/>
            <person name="Oyama R."/>
            <person name="Ravasi T."/>
            <person name="Lenhard B."/>
            <person name="Wells C."/>
            <person name="Kodzius R."/>
            <person name="Shimokawa K."/>
            <person name="Bajic V.B."/>
            <person name="Brenner S.E."/>
            <person name="Batalov S."/>
            <person name="Forrest A.R."/>
            <person name="Zavolan M."/>
            <person name="Davis M.J."/>
            <person name="Wilming L.G."/>
            <person name="Aidinis V."/>
            <person name="Allen J.E."/>
            <person name="Ambesi-Impiombato A."/>
            <person name="Apweiler R."/>
            <person name="Aturaliya R.N."/>
            <person name="Bailey T.L."/>
            <person name="Bansal M."/>
            <person name="Baxter L."/>
            <person name="Beisel K.W."/>
            <person name="Bersano T."/>
            <person name="Bono H."/>
            <person name="Chalk A.M."/>
            <person name="Chiu K.P."/>
            <person name="Choudhary V."/>
            <person name="Christoffels A."/>
            <person name="Clutterbuck D.R."/>
            <person name="Crowe M.L."/>
            <person name="Dalla E."/>
            <person name="Dalrymple B.P."/>
            <person name="de Bono B."/>
            <person name="Della Gatta G."/>
            <person name="di Bernardo D."/>
            <person name="Down T."/>
            <person name="Engstrom P."/>
            <person name="Fagiolini M."/>
            <person name="Faulkner G."/>
            <person name="Fletcher C.F."/>
            <person name="Fukushima T."/>
            <person name="Furuno M."/>
            <person name="Futaki S."/>
            <person name="Gariboldi M."/>
            <person name="Georgii-Hemming P."/>
            <person name="Gingeras T.R."/>
            <person name="Gojobori T."/>
            <person name="Green R.E."/>
            <person name="Gustincich S."/>
            <person name="Harbers M."/>
            <person name="Hayashi Y."/>
            <person name="Hensch T.K."/>
            <person name="Hirokawa N."/>
            <person name="Hill D."/>
            <person name="Huminiecki L."/>
            <person name="Iacono M."/>
            <person name="Ikeo K."/>
            <person name="Iwama A."/>
            <person name="Ishikawa T."/>
            <person name="Jakt M."/>
            <person name="Kanapin A."/>
            <person name="Katoh M."/>
            <person name="Kawasawa Y."/>
            <person name="Kelso J."/>
            <person name="Kitamura H."/>
            <person name="Kitano H."/>
            <person name="Kollias G."/>
            <person name="Krishnan S.P."/>
            <person name="Kruger A."/>
            <person name="Kummerfeld S.K."/>
            <person name="Kurochkin I.V."/>
            <person name="Lareau L.F."/>
            <person name="Lazarevic D."/>
            <person name="Lipovich L."/>
            <person name="Liu J."/>
            <person name="Liuni S."/>
            <person name="McWilliam S."/>
            <person name="Madan Babu M."/>
            <person name="Madera M."/>
            <person name="Marchionni L."/>
            <person name="Matsuda H."/>
            <person name="Matsuzawa S."/>
            <person name="Miki H."/>
            <person name="Mignone F."/>
            <person name="Miyake S."/>
            <person name="Morris K."/>
            <person name="Mottagui-Tabar S."/>
            <person name="Mulder N."/>
            <person name="Nakano N."/>
            <person name="Nakauchi H."/>
            <person name="Ng P."/>
            <person name="Nilsson R."/>
            <person name="Nishiguchi S."/>
            <person name="Nishikawa S."/>
            <person name="Nori F."/>
            <person name="Ohara O."/>
            <person name="Okazaki Y."/>
            <person name="Orlando V."/>
            <person name="Pang K.C."/>
            <person name="Pavan W.J."/>
            <person name="Pavesi G."/>
            <person name="Pesole G."/>
            <person name="Petrovsky N."/>
            <person name="Piazza S."/>
            <person name="Reed J."/>
            <person name="Reid J.F."/>
            <person name="Ring B.Z."/>
            <person name="Ringwald M."/>
            <person name="Rost B."/>
            <person name="Ruan Y."/>
            <person name="Salzberg S.L."/>
            <person name="Sandelin A."/>
            <person name="Schneider C."/>
            <person name="Schoenbach C."/>
            <person name="Sekiguchi K."/>
            <person name="Semple C.A."/>
            <person name="Seno S."/>
            <person name="Sessa L."/>
            <person name="Sheng Y."/>
            <person name="Shibata Y."/>
            <person name="Shimada H."/>
            <person name="Shimada K."/>
            <person name="Silva D."/>
            <person name="Sinclair B."/>
            <person name="Sperling S."/>
            <person name="Stupka E."/>
            <person name="Sugiura K."/>
            <person name="Sultana R."/>
            <person name="Takenaka Y."/>
            <person name="Taki K."/>
            <person name="Tammoja K."/>
            <person name="Tan S.L."/>
            <person name="Tang S."/>
            <person name="Taylor M.S."/>
            <person name="Tegner J."/>
            <person name="Teichmann S.A."/>
            <person name="Ueda H.R."/>
            <person name="van Nimwegen E."/>
            <person name="Verardo R."/>
            <person name="Wei C.L."/>
            <person name="Yagi K."/>
            <person name="Yamanishi H."/>
            <person name="Zabarovsky E."/>
            <person name="Zhu S."/>
            <person name="Zimmer A."/>
            <person name="Hide W."/>
            <person name="Bult C."/>
            <person name="Grimmond S.M."/>
            <person name="Teasdale R.D."/>
            <person name="Liu E.T."/>
            <person name="Brusic V."/>
            <person name="Quackenbush J."/>
            <person name="Wahlestedt C."/>
            <person name="Mattick J.S."/>
            <person name="Hume D.A."/>
            <person name="Kai C."/>
            <person name="Sasaki D."/>
            <person name="Tomaru Y."/>
            <person name="Fukuda S."/>
            <person name="Kanamori-Katayama M."/>
            <person name="Suzuki M."/>
            <person name="Aoki J."/>
            <person name="Arakawa T."/>
            <person name="Iida J."/>
            <person name="Imamura K."/>
            <person name="Itoh M."/>
            <person name="Kato T."/>
            <person name="Kawaji H."/>
            <person name="Kawagashira N."/>
            <person name="Kawashima T."/>
            <person name="Kojima M."/>
            <person name="Kondo S."/>
            <person name="Konno H."/>
            <person name="Nakano K."/>
            <person name="Ninomiya N."/>
            <person name="Nishio T."/>
            <person name="Okada M."/>
            <person name="Plessy C."/>
            <person name="Shibata K."/>
            <person name="Shiraki T."/>
            <person name="Suzuki S."/>
            <person name="Tagami M."/>
            <person name="Waki K."/>
            <person name="Watahiki A."/>
            <person name="Okamura-Oho Y."/>
            <person name="Suzuki H."/>
            <person name="Kawai J."/>
            <person name="Hayashizaki Y."/>
        </authorList>
    </citation>
    <scope>NUCLEOTIDE SEQUENCE [LARGE SCALE MRNA]</scope>
    <source>
        <strain>C57BL/6J</strain>
        <strain>NOD</strain>
        <tissue>Thymus</tissue>
    </source>
</reference>
<reference key="5">
    <citation type="journal article" date="2004" name="Genome Res.">
        <title>The status, quality, and expansion of the NIH full-length cDNA project: the Mammalian Gene Collection (MGC).</title>
        <authorList>
            <consortium name="The MGC Project Team"/>
        </authorList>
    </citation>
    <scope>NUCLEOTIDE SEQUENCE [LARGE SCALE MRNA]</scope>
    <source>
        <tissue>Lung</tissue>
    </source>
</reference>
<reference key="6">
    <citation type="journal article" date="2005" name="Am. J. Pathol.">
        <title>Heparanase regulates murine hair growth.</title>
        <authorList>
            <person name="Zcharia E."/>
            <person name="Philp D."/>
            <person name="Edovitsky E."/>
            <person name="Aingorn H."/>
            <person name="Metzger S."/>
            <person name="Kleinman H.K."/>
            <person name="Vlodavsky I."/>
            <person name="Elkin M."/>
        </authorList>
    </citation>
    <scope>FUNCTION</scope>
    <scope>SUBCELLULAR LOCATION</scope>
    <scope>TISSUE SPECIFICITY</scope>
</reference>
<reference key="7">
    <citation type="journal article" date="2005" name="FASEB J.">
        <title>Heparanase accelerates wound angiogenesis and wound healing in mouse and rat models.</title>
        <authorList>
            <person name="Zcharia E."/>
            <person name="Zilka R."/>
            <person name="Yaar A."/>
            <person name="Yacoby-Zeevi O."/>
            <person name="Zetser A."/>
            <person name="Metzger S."/>
            <person name="Sarid R."/>
            <person name="Naggi A."/>
            <person name="Casu B."/>
            <person name="Ilan N."/>
            <person name="Vlodavsky I."/>
            <person name="Abramovitch R."/>
        </authorList>
    </citation>
    <scope>FUNCTION</scope>
    <scope>ENZYMATIC ACTIVITY</scope>
    <scope>DEVELOPMENTAL STAGE</scope>
</reference>
<reference key="8">
    <citation type="journal article" date="2007" name="Biochem. Biophys. Res. Commun.">
        <title>Heparanase induces Akt phosphorylation via a lipid raft receptor.</title>
        <authorList>
            <person name="Ben-Zaken O."/>
            <person name="Gingis-Velitski S."/>
            <person name="Vlodavsky I."/>
            <person name="Ilan N."/>
        </authorList>
    </citation>
    <scope>FUNCTION</scope>
</reference>
<reference key="9">
    <citation type="journal article" date="2008" name="Bone">
        <title>Heparanase expression and activity influences chondrogenic and osteogenic processes during endochondral bone formation.</title>
        <authorList>
            <person name="Brown A.J."/>
            <person name="Alicknavitch M."/>
            <person name="D'Souza S.S."/>
            <person name="Daikoku T."/>
            <person name="Kirn-Safran C.B."/>
            <person name="Marchetti D."/>
            <person name="Carson D.D."/>
            <person name="Farach-Carson M.C."/>
        </authorList>
    </citation>
    <scope>FUNCTION</scope>
    <scope>ENZYMATIC ACTIVITY</scope>
    <scope>PROTEOLYTIC PROCESSING</scope>
    <scope>TISSUE SPECIFICITY</scope>
</reference>
<proteinExistence type="evidence at protein level"/>
<gene>
    <name type="primary">Hpse</name>
    <name type="synonym">Hpa</name>
</gene>
<name>HPSE_MOUSE</name>
<comment type="function">
    <text evidence="5 6 7 8">Endoglycosidase that cleaves heparan sulfate proteoglycans (HSPGs) into heparan sulfate side chains and core proteoglycans. Participates in extracellular matrix (ECM) degradation and remodeling. Selectively cleaves the linkage between a glucuronic acid unit and an N-sulfo glucosamine unit carrying either a 3-O-sulfo or a 6-O-sulfo group. Can also cleave the linkage between a glucuronic acid unit and an N-sulfo glucosamine unit carrying a 2-O-sulfo group, but not linkages between a glucuronic acid unit and a 2-O-sulfated iduronic acid moiety. It is essentially inactive at neutral pH but becomes active under acidic conditions such as during tumor invasion and in inflammatory processes. Facilitates cell migration associated with metastasis, wound healing and inflammation. Enhances shedding of syndecans, and increases endothelial invasion and angiogenesis in myelomas. Acts as a procoagulant by increasing the generation of activation factor X in the presence of tissue factor and activation factor VII. Increases cell adhesion to the extracellular matrix (ECM), independent of its enzymatic activity. Induces AKT1/PKB phosphorylation via lipid rafts increasing cell mobility and invasion. Heparin increases this AKT1/PKB activation. Regulates osteogenesis. Enhances angiogenesis through up-regulation of SRC-mediated activation of VEGF. Implicated in hair follicle inner root sheath differentiation and hair homeostasis.</text>
</comment>
<comment type="catalytic activity">
    <reaction evidence="5 8">
        <text>endohydrolysis of (1-&gt;4)-beta-D-glycosidic bonds of heparan sulfate chains in heparan sulfate proteoglycan.</text>
        <dbReference type="EC" id="3.2.1.166"/>
    </reaction>
</comment>
<comment type="activity regulation">
    <text evidence="1 3 4">Inhibited by EDTA and activated by calcium and magnesium (By similarity). Inhibited by laminarin sulfate and, to a lower extent, by heparin and sulfamin.</text>
</comment>
<comment type="biophysicochemical properties">
    <phDependence>
        <text evidence="3">Optimum pH is 5.</text>
    </phDependence>
</comment>
<comment type="subunit">
    <text evidence="1">Heterodimer; heterodimer formation between the 8 kDa and the 50 kDa subunits is required for enzyme activity. Interacts with TF; the interaction, inhibited by heparin, enhances the generation of activated factor X and activates coagulation. Interacts with HRG; the interaction is enhanced at acidic pH, partially inhibits binding of HPSE to cell surface receptors and modulates its enzymatic activity. Interacts with SDC1; the interaction enhances the shedding of SDC1 (By similarity). Interacts with HPSE2 (By similarity).</text>
</comment>
<comment type="subcellular location">
    <subcellularLocation>
        <location evidence="1">Lysosome membrane</location>
        <topology evidence="1">Peripheral membrane protein</topology>
    </subcellularLocation>
    <subcellularLocation>
        <location evidence="6">Secreted</location>
    </subcellularLocation>
    <subcellularLocation>
        <location evidence="6">Nucleus</location>
    </subcellularLocation>
    <text evidence="1">Proheparanase is secreted via vesicles of the Golgi. Interacts with cell membrane heparan sulfate proteoglycans (HSPGs). Endocytosed and accumulates in endosomes. Transferred to lysosomes where it is proteolytically cleaved to produce the active enzyme. Under certain stimuli, transferred to the cell surface. Colocalizes with SDC1 in endosomal/lysosomal vesicles. Accumulates in perinuclear lysosomal vesicles. Heparin retains proheparanase in the extracellular medium (By similarity). Associates with lipid rafts.</text>
</comment>
<comment type="tissue specificity">
    <text evidence="6 8">Expressed in skin, mainly in the stratum granulosum and the first layer of the stratum corneum in the upper part of the epidermis. Also detected in hair follicles and in sebaceous glands.</text>
</comment>
<comment type="developmental stage">
    <text evidence="5">In 18.5 day embryos, expressed in the peri-chondrium, periosteum and at the chondro-osseus junction of developing bone.</text>
</comment>
<comment type="PTM">
    <text evidence="1">Proteolytically processed. The cleavage of the 65 kDa form leads to the generation of a linker peptide, and the 8 kDa and 50 kDa products. The active form, the 8/50 kDa heterodimer, is resistant to degradation. Complete removal of the linker peptide appears to be a prerequisite to the complete activation of the enzyme (By similarity).</text>
</comment>
<comment type="PTM">
    <text evidence="3">N-glycosylated. Glycosylation of the 50 kDa subunit appears to be essential for its solubility.</text>
</comment>
<comment type="similarity">
    <text evidence="9">Belongs to the glycosyl hydrolase 79 family.</text>
</comment>
<evidence type="ECO:0000250" key="1"/>
<evidence type="ECO:0000250" key="2">
    <source>
        <dbReference type="UniProtKB" id="Q9Y251"/>
    </source>
</evidence>
<evidence type="ECO:0000269" key="3">
    <source>
    </source>
</evidence>
<evidence type="ECO:0000269" key="4">
    <source>
    </source>
</evidence>
<evidence type="ECO:0000269" key="5">
    <source>
    </source>
</evidence>
<evidence type="ECO:0000269" key="6">
    <source>
    </source>
</evidence>
<evidence type="ECO:0000269" key="7">
    <source>
    </source>
</evidence>
<evidence type="ECO:0000269" key="8">
    <source>
    </source>
</evidence>
<evidence type="ECO:0000305" key="9"/>
<sequence length="535" mass="60066">MLRLLLLWLWGPLGALAQGAPAGTAPTDDVVDLEFYTKRPLRSVSPSFLSITIDASLATDPRFLTFLGSPRLRALARGLSPAYLRFGGTKTDFLIFDPDKEPTSEERSYWKSQVNHDICRSEPVSAAVLRKLQVEWPFQELLLLREQYQKEFKNSTYSRSSVDMLYSFAKCSGLDLIFGLNALLRTPDLRWNSSNAQLLLDYCSSKGYNISWELGNEPNSFWKKAHILIDGLQLGEDFVELHKLLQRSAFQNAKLYGPDIGQPRGKTVKLLRSFLKAGGEVIDSLTWHHYYLNGRIATKEDFLSSDVLDTFILSVQKILKVTKEITPGKKVWLGETSSAYGGGAPLLSNTFAAGFMWLDKLGLSAQMGIEVVMRQVFFGAGNYHLVDENFEPLPDYWLSLLFKKLVGPRVLLSRVKGPDRSKLRVYLHCTNVYHPRYQEGDLTLYVLNLHNVTKHLKVPPPLFRKPVDTYLLKPSGPDGLLSKSVQLNGQILKMVDEQTLPALTEKPLPAGSALSLPAFSYGFFVIRNAKIAACI</sequence>
<dbReference type="EC" id="3.2.1.166"/>
<dbReference type="EMBL" id="AF359507">
    <property type="protein sequence ID" value="AAQ15188.1"/>
    <property type="molecule type" value="mRNA"/>
</dbReference>
<dbReference type="EMBL" id="AY077467">
    <property type="protein sequence ID" value="AAL76083.1"/>
    <property type="molecule type" value="mRNA"/>
</dbReference>
<dbReference type="EMBL" id="AY151051">
    <property type="protein sequence ID" value="AAN41636.1"/>
    <property type="molecule type" value="mRNA"/>
</dbReference>
<dbReference type="EMBL" id="AK040471">
    <property type="protein sequence ID" value="BAC30600.1"/>
    <property type="molecule type" value="mRNA"/>
</dbReference>
<dbReference type="EMBL" id="AK154628">
    <property type="protein sequence ID" value="BAE32725.1"/>
    <property type="molecule type" value="mRNA"/>
</dbReference>
<dbReference type="EMBL" id="BC138782">
    <property type="protein sequence ID" value="AAI38783.1"/>
    <property type="molecule type" value="mRNA"/>
</dbReference>
<dbReference type="EMBL" id="BC138784">
    <property type="protein sequence ID" value="AAI38785.1"/>
    <property type="molecule type" value="mRNA"/>
</dbReference>
<dbReference type="CCDS" id="CCDS19466.1"/>
<dbReference type="RefSeq" id="NP_690016.1">
    <property type="nucleotide sequence ID" value="NM_152803.5"/>
</dbReference>
<dbReference type="SMR" id="Q6YGZ1"/>
<dbReference type="ComplexPortal" id="CPX-363">
    <property type="entry name" value="Heparanase complex"/>
</dbReference>
<dbReference type="FunCoup" id="Q6YGZ1">
    <property type="interactions" value="86"/>
</dbReference>
<dbReference type="STRING" id="10090.ENSMUSP00000044072"/>
<dbReference type="BindingDB" id="Q6YGZ1"/>
<dbReference type="ChEMBL" id="CHEMBL4295872"/>
<dbReference type="CAZy" id="GH79">
    <property type="family name" value="Glycoside Hydrolase Family 79"/>
</dbReference>
<dbReference type="GlyCosmos" id="Q6YGZ1">
    <property type="glycosylation" value="3 sites, No reported glycans"/>
</dbReference>
<dbReference type="GlyGen" id="Q6YGZ1">
    <property type="glycosylation" value="3 sites, 1 N-linked glycan (1 site)"/>
</dbReference>
<dbReference type="iPTMnet" id="Q6YGZ1"/>
<dbReference type="PhosphoSitePlus" id="Q6YGZ1"/>
<dbReference type="PaxDb" id="10090-ENSMUSP00000044072"/>
<dbReference type="ProteomicsDB" id="267016"/>
<dbReference type="ABCD" id="Q6YGZ1">
    <property type="antibodies" value="8 sequenced antibodies"/>
</dbReference>
<dbReference type="Antibodypedia" id="4072">
    <property type="antibodies" value="563 antibodies from 34 providers"/>
</dbReference>
<dbReference type="DNASU" id="15442"/>
<dbReference type="Ensembl" id="ENSMUST00000045617.15">
    <property type="protein sequence ID" value="ENSMUSP00000044072.9"/>
    <property type="gene ID" value="ENSMUSG00000035273.15"/>
</dbReference>
<dbReference type="GeneID" id="15442"/>
<dbReference type="KEGG" id="mmu:15442"/>
<dbReference type="UCSC" id="uc008yhw.1">
    <property type="organism name" value="mouse"/>
</dbReference>
<dbReference type="AGR" id="MGI:1343124"/>
<dbReference type="CTD" id="10855"/>
<dbReference type="MGI" id="MGI:1343124">
    <property type="gene designation" value="Hpse"/>
</dbReference>
<dbReference type="VEuPathDB" id="HostDB:ENSMUSG00000035273"/>
<dbReference type="eggNOG" id="ENOG502QQST">
    <property type="taxonomic scope" value="Eukaryota"/>
</dbReference>
<dbReference type="GeneTree" id="ENSGT00390000004874"/>
<dbReference type="HOGENOM" id="CLU_021823_0_1_1"/>
<dbReference type="InParanoid" id="Q6YGZ1"/>
<dbReference type="OMA" id="RMYLHCT"/>
<dbReference type="OrthoDB" id="726732at2759"/>
<dbReference type="PhylomeDB" id="Q6YGZ1"/>
<dbReference type="TreeFam" id="TF328999"/>
<dbReference type="BRENDA" id="3.2.1.166">
    <property type="organism ID" value="3474"/>
</dbReference>
<dbReference type="Reactome" id="R-MMU-2024096">
    <property type="pathway name" value="HS-GAG degradation"/>
</dbReference>
<dbReference type="Reactome" id="R-MMU-6798695">
    <property type="pathway name" value="Neutrophil degranulation"/>
</dbReference>
<dbReference type="BioGRID-ORCS" id="15442">
    <property type="hits" value="3 hits in 77 CRISPR screens"/>
</dbReference>
<dbReference type="ChiTaRS" id="Hpse">
    <property type="organism name" value="mouse"/>
</dbReference>
<dbReference type="PRO" id="PR:Q6YGZ1"/>
<dbReference type="Proteomes" id="UP000000589">
    <property type="component" value="Chromosome 5"/>
</dbReference>
<dbReference type="RNAct" id="Q6YGZ1">
    <property type="molecule type" value="protein"/>
</dbReference>
<dbReference type="Bgee" id="ENSMUSG00000035273">
    <property type="expression patterns" value="Expressed in iris and 154 other cell types or tissues"/>
</dbReference>
<dbReference type="ExpressionAtlas" id="Q6YGZ1">
    <property type="expression patterns" value="baseline and differential"/>
</dbReference>
<dbReference type="GO" id="GO:0031012">
    <property type="term" value="C:extracellular matrix"/>
    <property type="evidence" value="ECO:0000304"/>
    <property type="project" value="MGI"/>
</dbReference>
<dbReference type="GO" id="GO:0005615">
    <property type="term" value="C:extracellular space"/>
    <property type="evidence" value="ECO:0000314"/>
    <property type="project" value="MGI"/>
</dbReference>
<dbReference type="GO" id="GO:0043202">
    <property type="term" value="C:lysosomal lumen"/>
    <property type="evidence" value="ECO:0000266"/>
    <property type="project" value="MGI"/>
</dbReference>
<dbReference type="GO" id="GO:0005765">
    <property type="term" value="C:lysosomal membrane"/>
    <property type="evidence" value="ECO:0007669"/>
    <property type="project" value="UniProtKB-SubCell"/>
</dbReference>
<dbReference type="GO" id="GO:0045121">
    <property type="term" value="C:membrane raft"/>
    <property type="evidence" value="ECO:0000314"/>
    <property type="project" value="UniProtKB"/>
</dbReference>
<dbReference type="GO" id="GO:0005654">
    <property type="term" value="C:nucleoplasm"/>
    <property type="evidence" value="ECO:0007669"/>
    <property type="project" value="Ensembl"/>
</dbReference>
<dbReference type="GO" id="GO:0005634">
    <property type="term" value="C:nucleus"/>
    <property type="evidence" value="ECO:0000314"/>
    <property type="project" value="UniProtKB"/>
</dbReference>
<dbReference type="GO" id="GO:0005886">
    <property type="term" value="C:plasma membrane"/>
    <property type="evidence" value="ECO:0000266"/>
    <property type="project" value="MGI"/>
</dbReference>
<dbReference type="GO" id="GO:0140355">
    <property type="term" value="F:cargo receptor ligand activity"/>
    <property type="evidence" value="ECO:0000266"/>
    <property type="project" value="MGI"/>
</dbReference>
<dbReference type="GO" id="GO:0030305">
    <property type="term" value="F:heparanase activity"/>
    <property type="evidence" value="ECO:0000314"/>
    <property type="project" value="MGI"/>
</dbReference>
<dbReference type="GO" id="GO:0045545">
    <property type="term" value="F:syndecan binding"/>
    <property type="evidence" value="ECO:0007669"/>
    <property type="project" value="Ensembl"/>
</dbReference>
<dbReference type="GO" id="GO:0060055">
    <property type="term" value="P:angiogenesis involved in wound healing"/>
    <property type="evidence" value="ECO:0000314"/>
    <property type="project" value="UniProtKB"/>
</dbReference>
<dbReference type="GO" id="GO:0007160">
    <property type="term" value="P:cell-matrix adhesion"/>
    <property type="evidence" value="ECO:0007669"/>
    <property type="project" value="Ensembl"/>
</dbReference>
<dbReference type="GO" id="GO:0061028">
    <property type="term" value="P:establishment of endothelial barrier"/>
    <property type="evidence" value="ECO:0000314"/>
    <property type="project" value="MGI"/>
</dbReference>
<dbReference type="GO" id="GO:0030200">
    <property type="term" value="P:heparan sulfate proteoglycan catabolic process"/>
    <property type="evidence" value="ECO:0000314"/>
    <property type="project" value="MGI"/>
</dbReference>
<dbReference type="GO" id="GO:0030202">
    <property type="term" value="P:heparin proteoglycan metabolic process"/>
    <property type="evidence" value="ECO:0000314"/>
    <property type="project" value="MGI"/>
</dbReference>
<dbReference type="GO" id="GO:0030194">
    <property type="term" value="P:positive regulation of blood coagulation"/>
    <property type="evidence" value="ECO:0007669"/>
    <property type="project" value="Ensembl"/>
</dbReference>
<dbReference type="GO" id="GO:0051798">
    <property type="term" value="P:positive regulation of hair follicle development"/>
    <property type="evidence" value="ECO:0000314"/>
    <property type="project" value="UniProtKB"/>
</dbReference>
<dbReference type="GO" id="GO:0033690">
    <property type="term" value="P:positive regulation of osteoblast proliferation"/>
    <property type="evidence" value="ECO:0000314"/>
    <property type="project" value="UniProtKB"/>
</dbReference>
<dbReference type="GO" id="GO:0051897">
    <property type="term" value="P:positive regulation of phosphatidylinositol 3-kinase/protein kinase B signal transduction"/>
    <property type="evidence" value="ECO:0000314"/>
    <property type="project" value="UniProtKB"/>
</dbReference>
<dbReference type="GO" id="GO:0010575">
    <property type="term" value="P:positive regulation of vascular endothelial growth factor production"/>
    <property type="evidence" value="ECO:0007669"/>
    <property type="project" value="Ensembl"/>
</dbReference>
<dbReference type="GO" id="GO:0071806">
    <property type="term" value="P:protein transmembrane transport"/>
    <property type="evidence" value="ECO:0000315"/>
    <property type="project" value="MGI"/>
</dbReference>
<dbReference type="GO" id="GO:0006898">
    <property type="term" value="P:receptor-mediated endocytosis"/>
    <property type="evidence" value="ECO:0000266"/>
    <property type="project" value="MGI"/>
</dbReference>
<dbReference type="GO" id="GO:0046677">
    <property type="term" value="P:response to antibiotic"/>
    <property type="evidence" value="ECO:0000314"/>
    <property type="project" value="MGI"/>
</dbReference>
<dbReference type="GO" id="GO:0061042">
    <property type="term" value="P:vascular wound healing"/>
    <property type="evidence" value="ECO:0000314"/>
    <property type="project" value="UniProtKB"/>
</dbReference>
<dbReference type="GO" id="GO:0042060">
    <property type="term" value="P:wound healing"/>
    <property type="evidence" value="ECO:0000314"/>
    <property type="project" value="UniProtKB"/>
</dbReference>
<dbReference type="Gene3D" id="3.20.20.80">
    <property type="entry name" value="Glycosidases"/>
    <property type="match status" value="1"/>
</dbReference>
<dbReference type="InterPro" id="IPR005199">
    <property type="entry name" value="Glyco_hydro_79"/>
</dbReference>
<dbReference type="InterPro" id="IPR017853">
    <property type="entry name" value="Glycoside_hydrolase_SF"/>
</dbReference>
<dbReference type="PANTHER" id="PTHR46145">
    <property type="entry name" value="HEPARANASE"/>
    <property type="match status" value="1"/>
</dbReference>
<dbReference type="PANTHER" id="PTHR46145:SF3">
    <property type="entry name" value="HEPARANASE"/>
    <property type="match status" value="1"/>
</dbReference>
<dbReference type="Pfam" id="PF03662">
    <property type="entry name" value="Glyco_hydro_79n"/>
    <property type="match status" value="1"/>
</dbReference>
<dbReference type="SUPFAM" id="SSF51445">
    <property type="entry name" value="(Trans)glycosidases"/>
    <property type="match status" value="1"/>
</dbReference>
<keyword id="KW-0106">Calcium</keyword>
<keyword id="KW-0130">Cell adhesion</keyword>
<keyword id="KW-0903">Direct protein sequencing</keyword>
<keyword id="KW-1015">Disulfide bond</keyword>
<keyword id="KW-0325">Glycoprotein</keyword>
<keyword id="KW-0378">Hydrolase</keyword>
<keyword id="KW-0458">Lysosome</keyword>
<keyword id="KW-0460">Magnesium</keyword>
<keyword id="KW-0472">Membrane</keyword>
<keyword id="KW-0539">Nucleus</keyword>
<keyword id="KW-1185">Reference proteome</keyword>
<keyword id="KW-0964">Secreted</keyword>
<keyword id="KW-0732">Signal</keyword>
<organism>
    <name type="scientific">Mus musculus</name>
    <name type="common">Mouse</name>
    <dbReference type="NCBI Taxonomy" id="10090"/>
    <lineage>
        <taxon>Eukaryota</taxon>
        <taxon>Metazoa</taxon>
        <taxon>Chordata</taxon>
        <taxon>Craniata</taxon>
        <taxon>Vertebrata</taxon>
        <taxon>Euteleostomi</taxon>
        <taxon>Mammalia</taxon>
        <taxon>Eutheria</taxon>
        <taxon>Euarchontoglires</taxon>
        <taxon>Glires</taxon>
        <taxon>Rodentia</taxon>
        <taxon>Myomorpha</taxon>
        <taxon>Muroidea</taxon>
        <taxon>Muridae</taxon>
        <taxon>Murinae</taxon>
        <taxon>Mus</taxon>
        <taxon>Mus</taxon>
    </lineage>
</organism>
<protein>
    <recommendedName>
        <fullName>Heparanase</fullName>
        <ecNumber>3.2.1.166</ecNumber>
    </recommendedName>
    <alternativeName>
        <fullName>Endo-glucoronidase</fullName>
    </alternativeName>
    <component>
        <recommendedName>
            <fullName>Heparanase 8 kDa subunit</fullName>
        </recommendedName>
    </component>
    <component>
        <recommendedName>
            <fullName>Heparanase 50 kDa subunit</fullName>
        </recommendedName>
    </component>
</protein>
<accession>Q6YGZ1</accession>
<accession>B2RS99</accession>
<accession>Q8K3K3</accession>
<feature type="signal peptide" evidence="1">
    <location>
        <begin position="1"/>
        <end position="27"/>
    </location>
</feature>
<feature type="chain" id="PRO_0000042263" description="Heparanase 8 kDa subunit">
    <location>
        <begin position="28"/>
        <end position="101"/>
    </location>
</feature>
<feature type="propeptide" id="PRO_0000042264" description="Linker peptide" evidence="1">
    <location>
        <begin position="102"/>
        <end position="149"/>
    </location>
</feature>
<feature type="chain" id="PRO_0000042265" description="Heparanase 50 kDa subunit">
    <location>
        <begin position="150"/>
        <end position="535"/>
    </location>
</feature>
<feature type="region of interest" description="Required for heterodimerization with the heparanase 8 kDa subunit" evidence="2">
    <location>
        <begin position="280"/>
        <end position="409"/>
    </location>
</feature>
<feature type="region of interest" description="Required for transferring proheparanase to the Golgi apparatus, secretion and subsequent enzyme activity and for enhancement of PKB/AKT1 phosphorylation" evidence="2">
    <location>
        <begin position="519"/>
        <end position="535"/>
    </location>
</feature>
<feature type="active site" description="Proton donor" evidence="2">
    <location>
        <position position="217"/>
    </location>
</feature>
<feature type="active site" description="Nucleophile" evidence="2">
    <location>
        <position position="335"/>
    </location>
</feature>
<feature type="binding site" evidence="2">
    <location>
        <begin position="54"/>
        <end position="56"/>
    </location>
    <ligand>
        <name>heparan sulfate group</name>
        <dbReference type="ChEBI" id="CHEBI:157750"/>
    </ligand>
</feature>
<feature type="binding site" evidence="2">
    <location>
        <position position="89"/>
    </location>
    <ligand>
        <name>heparan sulfate group</name>
        <dbReference type="ChEBI" id="CHEBI:157750"/>
    </ligand>
</feature>
<feature type="binding site" evidence="2">
    <location>
        <begin position="150"/>
        <end position="154"/>
    </location>
    <ligand>
        <name>heparan sulfate group</name>
        <dbReference type="ChEBI" id="CHEBI:157750"/>
    </ligand>
</feature>
<feature type="binding site" evidence="2">
    <location>
        <begin position="262"/>
        <end position="272"/>
    </location>
    <ligand>
        <name>heparan sulfate group</name>
        <dbReference type="ChEBI" id="CHEBI:157750"/>
    </ligand>
</feature>
<feature type="binding site" evidence="2">
    <location>
        <position position="288"/>
    </location>
    <ligand>
        <name>heparan sulfate group</name>
        <dbReference type="ChEBI" id="CHEBI:157750"/>
    </ligand>
</feature>
<feature type="binding site" evidence="2">
    <location>
        <position position="295"/>
    </location>
    <ligand>
        <name>heparan sulfate group</name>
        <dbReference type="ChEBI" id="CHEBI:157750"/>
    </ligand>
</feature>
<feature type="binding site" evidence="2">
    <location>
        <begin position="340"/>
        <end position="342"/>
    </location>
    <ligand>
        <name>heparan sulfate group</name>
        <dbReference type="ChEBI" id="CHEBI:157750"/>
    </ligand>
</feature>
<feature type="binding site" evidence="2">
    <location>
        <begin position="381"/>
        <end position="383"/>
    </location>
    <ligand>
        <name>heparan sulfate group</name>
        <dbReference type="ChEBI" id="CHEBI:157750"/>
    </ligand>
</feature>
<feature type="glycosylation site" description="N-linked (GlcNAc...) asparagine" evidence="2">
    <location>
        <position position="192"/>
    </location>
</feature>
<feature type="glycosylation site" description="N-linked (GlcNAc...) asparagine" evidence="2">
    <location>
        <position position="209"/>
    </location>
</feature>
<feature type="glycosylation site" description="N-linked (GlcNAc...) asparagine" evidence="2">
    <location>
        <position position="451"/>
    </location>
</feature>
<feature type="disulfide bond" evidence="2">
    <location>
        <begin position="119"/>
        <end position="171"/>
    </location>
</feature>
<feature type="disulfide bond" evidence="2">
    <location>
        <begin position="429"/>
        <end position="534"/>
    </location>
</feature>
<feature type="sequence conflict" description="In Ref. 3; AAN41636." evidence="9" ref="3">
    <original>K</original>
    <variation>R</variation>
    <location>
        <position position="206"/>
    </location>
</feature>
<feature type="sequence conflict" description="In Ref. 3; AAN41636." evidence="9" ref="3">
    <original>W</original>
    <variation>S</variation>
    <location>
        <position position="212"/>
    </location>
</feature>
<feature type="sequence conflict" description="In Ref. 3; AAN41636." evidence="9" ref="3">
    <original>DGL</original>
    <variation>NGS</variation>
    <location>
        <begin position="230"/>
        <end position="232"/>
    </location>
</feature>
<feature type="sequence conflict" description="In Ref. 3; AAN41636." evidence="9" ref="3">
    <original>E</original>
    <variation>K</variation>
    <location>
        <position position="335"/>
    </location>
</feature>
<feature type="sequence conflict" description="In Ref. 3; AAN41636." evidence="9" ref="3">
    <original>G</original>
    <variation>A</variation>
    <location>
        <position position="342"/>
    </location>
</feature>
<feature type="sequence conflict" description="In Ref. 3; AAN41636." evidence="9" ref="3">
    <original>H</original>
    <variation>Y</variation>
    <location>
        <position position="455"/>
    </location>
</feature>
<feature type="sequence conflict" description="In Ref. 3; AAN41636." evidence="9" ref="3">
    <original>I</original>
    <variation>V</variation>
    <location>
        <position position="531"/>
    </location>
</feature>